<comment type="subcellular location">
    <subcellularLocation>
        <location evidence="2">Periplasm</location>
    </subcellularLocation>
</comment>
<comment type="miscellaneous">
    <text>Has lost the active site residues.</text>
</comment>
<comment type="similarity">
    <text evidence="2">Belongs to the peptidase M16 family.</text>
</comment>
<comment type="sequence caution" evidence="2">
    <conflict type="erroneous initiation">
        <sequence resource="EMBL-CDS" id="CAA62743"/>
    </conflict>
</comment>
<accession>P50335</accession>
<gene>
    <name type="primary">yhjJ</name>
    <name type="ordered locus">STM3613</name>
</gene>
<name>YHJJ_SALTY</name>
<reference key="1">
    <citation type="journal article" date="2001" name="Nature">
        <title>Complete genome sequence of Salmonella enterica serovar Typhimurium LT2.</title>
        <authorList>
            <person name="McClelland M."/>
            <person name="Sanderson K.E."/>
            <person name="Spieth J."/>
            <person name="Clifton S.W."/>
            <person name="Latreille P."/>
            <person name="Courtney L."/>
            <person name="Porwollik S."/>
            <person name="Ali J."/>
            <person name="Dante M."/>
            <person name="Du F."/>
            <person name="Hou S."/>
            <person name="Layman D."/>
            <person name="Leonard S."/>
            <person name="Nguyen C."/>
            <person name="Scott K."/>
            <person name="Holmes A."/>
            <person name="Grewal N."/>
            <person name="Mulvaney E."/>
            <person name="Ryan E."/>
            <person name="Sun H."/>
            <person name="Florea L."/>
            <person name="Miller W."/>
            <person name="Stoneking T."/>
            <person name="Nhan M."/>
            <person name="Waterston R."/>
            <person name="Wilson R.K."/>
        </authorList>
    </citation>
    <scope>NUCLEOTIDE SEQUENCE [LARGE SCALE GENOMIC DNA]</scope>
    <source>
        <strain>LT2 / SGSC1412 / ATCC 700720</strain>
    </source>
</reference>
<reference key="2">
    <citation type="journal article" date="1996" name="J. Bacteriol.">
        <title>Utilization of orotate as a pyrimidine source by Salmonella typhimurium and Escherichia coli requires the dicarboxylate transport protein encoded by dctA.</title>
        <authorList>
            <person name="Baker K.E."/>
            <person name="Ditullio K.P."/>
            <person name="Neuhard J."/>
            <person name="Kelln R.A."/>
        </authorList>
    </citation>
    <scope>NUCLEOTIDE SEQUENCE [GENOMIC DNA] OF 1-287</scope>
    <source>
        <strain>LT2</strain>
    </source>
</reference>
<sequence length="495" mass="55181">MQGTKIRLLAGSLLMLASAGYVQADALQPDPAWQQGTLANGLQWQVLATPQRPSDRIEVRLQVNTGSLTESTQQSGFSHAIPRIALTQSGGLDAAQARSLWQQGFDPKRPMPPVIVSYDSTLYNLSLPNNRNDLLKEALTYLANVSGKLTITPETVNHALSSEDMVATWPADTKEGWWRYRLKGSALLGHDPAEPLKQPVDAAKIQAFYEKWYTPDAMTLIVVGNIDARSVAEQINKTFGTLKGKRETPAPVPTLSPLRAESVSIMTDAVRQDRLSIMWDTPWQPIRESAALLRYWQADLAREALFWHIQQELTKNNAKDIGLGFDCRVLFLRAQCAINIESPNDKLNTNLSLVANELAKVRDKGLSEEEFTALVAQKNLELQKLFATYARTDTDILTGQRMRSLQNQVVDIAPEQYQKLRQNFLNSLTVDMLNQNLRQQLSQEMALILLQPQGEPEFNMKALKATWDEIMVPTTAAAVEADEAHPEVTETPAAQ</sequence>
<feature type="signal peptide" evidence="1">
    <location>
        <begin position="1"/>
        <end position="24"/>
    </location>
</feature>
<feature type="chain" id="PRO_0000026766" description="Protein YhjJ">
    <location>
        <begin position="25"/>
        <end position="495"/>
    </location>
</feature>
<feature type="sequence conflict" description="In Ref. 2; CAA62743." evidence="2" ref="2">
    <original>G</original>
    <variation>L</variation>
    <location>
        <position position="244"/>
    </location>
</feature>
<feature type="sequence conflict" description="In Ref. 2; CAA62743." evidence="2" ref="2">
    <original>DTPWQPIR</original>
    <variation>IRRGNRFA</variation>
    <location>
        <begin position="280"/>
        <end position="287"/>
    </location>
</feature>
<dbReference type="EMBL" id="AE006468">
    <property type="protein sequence ID" value="AAL22473.1"/>
    <property type="molecule type" value="Genomic_DNA"/>
</dbReference>
<dbReference type="EMBL" id="X91397">
    <property type="protein sequence ID" value="CAA62743.1"/>
    <property type="status" value="ALT_INIT"/>
    <property type="molecule type" value="Genomic_DNA"/>
</dbReference>
<dbReference type="RefSeq" id="NP_462514.1">
    <property type="nucleotide sequence ID" value="NC_003197.2"/>
</dbReference>
<dbReference type="RefSeq" id="WP_001163182.1">
    <property type="nucleotide sequence ID" value="NC_003197.2"/>
</dbReference>
<dbReference type="SMR" id="P50335"/>
<dbReference type="IntAct" id="P50335">
    <property type="interactions" value="1"/>
</dbReference>
<dbReference type="MINT" id="P50335"/>
<dbReference type="STRING" id="99287.STM3613"/>
<dbReference type="PaxDb" id="99287-STM3613"/>
<dbReference type="GeneID" id="1255136"/>
<dbReference type="KEGG" id="stm:STM3613"/>
<dbReference type="PATRIC" id="fig|99287.12.peg.3819"/>
<dbReference type="HOGENOM" id="CLU_043932_0_0_6"/>
<dbReference type="OMA" id="FWHVQQN"/>
<dbReference type="PhylomeDB" id="P50335"/>
<dbReference type="BioCyc" id="SENT99287:STM3613-MONOMER"/>
<dbReference type="Proteomes" id="UP000001014">
    <property type="component" value="Chromosome"/>
</dbReference>
<dbReference type="GO" id="GO:0042597">
    <property type="term" value="C:periplasmic space"/>
    <property type="evidence" value="ECO:0007669"/>
    <property type="project" value="UniProtKB-SubCell"/>
</dbReference>
<dbReference type="GO" id="GO:0046872">
    <property type="term" value="F:metal ion binding"/>
    <property type="evidence" value="ECO:0007669"/>
    <property type="project" value="InterPro"/>
</dbReference>
<dbReference type="GO" id="GO:0008237">
    <property type="term" value="F:metallopeptidase activity"/>
    <property type="evidence" value="ECO:0007669"/>
    <property type="project" value="UniProtKB-KW"/>
</dbReference>
<dbReference type="GO" id="GO:0006508">
    <property type="term" value="P:proteolysis"/>
    <property type="evidence" value="ECO:0007669"/>
    <property type="project" value="UniProtKB-KW"/>
</dbReference>
<dbReference type="Gene3D" id="3.30.830.10">
    <property type="entry name" value="Metalloenzyme, LuxS/M16 peptidase-like"/>
    <property type="match status" value="2"/>
</dbReference>
<dbReference type="InterPro" id="IPR011249">
    <property type="entry name" value="Metalloenz_LuxS/M16"/>
</dbReference>
<dbReference type="InterPro" id="IPR011765">
    <property type="entry name" value="Pept_M16_N"/>
</dbReference>
<dbReference type="InterPro" id="IPR050626">
    <property type="entry name" value="Peptidase_M16"/>
</dbReference>
<dbReference type="InterPro" id="IPR007863">
    <property type="entry name" value="Peptidase_M16_C"/>
</dbReference>
<dbReference type="PANTHER" id="PTHR43690">
    <property type="entry name" value="NARDILYSIN"/>
    <property type="match status" value="1"/>
</dbReference>
<dbReference type="PANTHER" id="PTHR43690:SF17">
    <property type="entry name" value="PROTEIN YHJJ"/>
    <property type="match status" value="1"/>
</dbReference>
<dbReference type="Pfam" id="PF00675">
    <property type="entry name" value="Peptidase_M16"/>
    <property type="match status" value="1"/>
</dbReference>
<dbReference type="Pfam" id="PF05193">
    <property type="entry name" value="Peptidase_M16_C"/>
    <property type="match status" value="1"/>
</dbReference>
<dbReference type="SUPFAM" id="SSF63411">
    <property type="entry name" value="LuxS/MPP-like metallohydrolase"/>
    <property type="match status" value="2"/>
</dbReference>
<keyword id="KW-0378">Hydrolase</keyword>
<keyword id="KW-0482">Metalloprotease</keyword>
<keyword id="KW-0574">Periplasm</keyword>
<keyword id="KW-0645">Protease</keyword>
<keyword id="KW-1185">Reference proteome</keyword>
<keyword id="KW-0732">Signal</keyword>
<keyword id="KW-0862">Zinc</keyword>
<organism>
    <name type="scientific">Salmonella typhimurium (strain LT2 / SGSC1412 / ATCC 700720)</name>
    <dbReference type="NCBI Taxonomy" id="99287"/>
    <lineage>
        <taxon>Bacteria</taxon>
        <taxon>Pseudomonadati</taxon>
        <taxon>Pseudomonadota</taxon>
        <taxon>Gammaproteobacteria</taxon>
        <taxon>Enterobacterales</taxon>
        <taxon>Enterobacteriaceae</taxon>
        <taxon>Salmonella</taxon>
    </lineage>
</organism>
<proteinExistence type="inferred from homology"/>
<evidence type="ECO:0000250" key="1"/>
<evidence type="ECO:0000305" key="2"/>
<protein>
    <recommendedName>
        <fullName>Protein YhjJ</fullName>
    </recommendedName>
</protein>